<dbReference type="EC" id="2.7.7.72" evidence="1"/>
<dbReference type="EC" id="3.1.3.-" evidence="1"/>
<dbReference type="EC" id="3.1.4.-" evidence="1"/>
<dbReference type="EMBL" id="AE004091">
    <property type="protein sequence ID" value="AAG03973.1"/>
    <property type="molecule type" value="Genomic_DNA"/>
</dbReference>
<dbReference type="PIR" id="D83573">
    <property type="entry name" value="D83573"/>
</dbReference>
<dbReference type="RefSeq" id="NP_249275.1">
    <property type="nucleotide sequence ID" value="NC_002516.2"/>
</dbReference>
<dbReference type="RefSeq" id="WP_003113214.1">
    <property type="nucleotide sequence ID" value="NZ_QZGE01000010.1"/>
</dbReference>
<dbReference type="SMR" id="Q9I5V3"/>
<dbReference type="FunCoup" id="Q9I5V3">
    <property type="interactions" value="281"/>
</dbReference>
<dbReference type="STRING" id="208964.PA0584"/>
<dbReference type="PaxDb" id="208964-PA0584"/>
<dbReference type="GeneID" id="877618"/>
<dbReference type="KEGG" id="pae:PA0584"/>
<dbReference type="PATRIC" id="fig|208964.12.peg.619"/>
<dbReference type="PseudoCAP" id="PA0584"/>
<dbReference type="HOGENOM" id="CLU_015961_1_1_6"/>
<dbReference type="InParanoid" id="Q9I5V3"/>
<dbReference type="OrthoDB" id="9805698at2"/>
<dbReference type="PhylomeDB" id="Q9I5V3"/>
<dbReference type="BioCyc" id="PAER208964:G1FZ6-591-MONOMER"/>
<dbReference type="Proteomes" id="UP000002438">
    <property type="component" value="Chromosome"/>
</dbReference>
<dbReference type="GO" id="GO:0005524">
    <property type="term" value="F:ATP binding"/>
    <property type="evidence" value="ECO:0007669"/>
    <property type="project" value="UniProtKB-UniRule"/>
</dbReference>
<dbReference type="GO" id="GO:0004810">
    <property type="term" value="F:CCA tRNA nucleotidyltransferase activity"/>
    <property type="evidence" value="ECO:0007669"/>
    <property type="project" value="UniProtKB-UniRule"/>
</dbReference>
<dbReference type="GO" id="GO:0160016">
    <property type="term" value="F:CCACCA tRNA nucleotidyltransferase activity"/>
    <property type="evidence" value="ECO:0000318"/>
    <property type="project" value="GO_Central"/>
</dbReference>
<dbReference type="GO" id="GO:0004112">
    <property type="term" value="F:cyclic-nucleotide phosphodiesterase activity"/>
    <property type="evidence" value="ECO:0007669"/>
    <property type="project" value="UniProtKB-UniRule"/>
</dbReference>
<dbReference type="GO" id="GO:0000287">
    <property type="term" value="F:magnesium ion binding"/>
    <property type="evidence" value="ECO:0007669"/>
    <property type="project" value="UniProtKB-UniRule"/>
</dbReference>
<dbReference type="GO" id="GO:0016791">
    <property type="term" value="F:phosphatase activity"/>
    <property type="evidence" value="ECO:0007669"/>
    <property type="project" value="UniProtKB-UniRule"/>
</dbReference>
<dbReference type="GO" id="GO:0000049">
    <property type="term" value="F:tRNA binding"/>
    <property type="evidence" value="ECO:0007669"/>
    <property type="project" value="UniProtKB-UniRule"/>
</dbReference>
<dbReference type="GO" id="GO:0042245">
    <property type="term" value="P:RNA repair"/>
    <property type="evidence" value="ECO:0007669"/>
    <property type="project" value="UniProtKB-KW"/>
</dbReference>
<dbReference type="GO" id="GO:0001680">
    <property type="term" value="P:tRNA 3'-terminal CCA addition"/>
    <property type="evidence" value="ECO:0000318"/>
    <property type="project" value="GO_Central"/>
</dbReference>
<dbReference type="GO" id="GO:0106354">
    <property type="term" value="P:tRNA surveillance"/>
    <property type="evidence" value="ECO:0000318"/>
    <property type="project" value="GO_Central"/>
</dbReference>
<dbReference type="CDD" id="cd00077">
    <property type="entry name" value="HDc"/>
    <property type="match status" value="1"/>
</dbReference>
<dbReference type="CDD" id="cd05398">
    <property type="entry name" value="NT_ClassII-CCAase"/>
    <property type="match status" value="1"/>
</dbReference>
<dbReference type="FunFam" id="1.10.3090.10:FF:000001">
    <property type="entry name" value="Multifunctional CCA protein"/>
    <property type="match status" value="1"/>
</dbReference>
<dbReference type="Gene3D" id="3.30.460.10">
    <property type="entry name" value="Beta Polymerase, domain 2"/>
    <property type="match status" value="1"/>
</dbReference>
<dbReference type="Gene3D" id="1.10.3090.10">
    <property type="entry name" value="cca-adding enzyme, domain 2"/>
    <property type="match status" value="1"/>
</dbReference>
<dbReference type="HAMAP" id="MF_01261">
    <property type="entry name" value="CCA_bact_type1"/>
    <property type="match status" value="1"/>
</dbReference>
<dbReference type="HAMAP" id="MF_01262">
    <property type="entry name" value="CCA_bact_type2"/>
    <property type="match status" value="1"/>
</dbReference>
<dbReference type="InterPro" id="IPR012006">
    <property type="entry name" value="CCA_bact"/>
</dbReference>
<dbReference type="InterPro" id="IPR003607">
    <property type="entry name" value="HD/PDEase_dom"/>
</dbReference>
<dbReference type="InterPro" id="IPR006674">
    <property type="entry name" value="HD_domain"/>
</dbReference>
<dbReference type="InterPro" id="IPR043519">
    <property type="entry name" value="NT_sf"/>
</dbReference>
<dbReference type="InterPro" id="IPR002646">
    <property type="entry name" value="PolA_pol_head_dom"/>
</dbReference>
<dbReference type="InterPro" id="IPR032828">
    <property type="entry name" value="PolyA_RNA-bd"/>
</dbReference>
<dbReference type="InterPro" id="IPR050124">
    <property type="entry name" value="tRNA_CCA-adding_enzyme"/>
</dbReference>
<dbReference type="NCBIfam" id="NF008137">
    <property type="entry name" value="PRK10885.1"/>
    <property type="match status" value="1"/>
</dbReference>
<dbReference type="PANTHER" id="PTHR47545">
    <property type="entry name" value="MULTIFUNCTIONAL CCA PROTEIN"/>
    <property type="match status" value="1"/>
</dbReference>
<dbReference type="PANTHER" id="PTHR47545:SF1">
    <property type="entry name" value="MULTIFUNCTIONAL CCA PROTEIN"/>
    <property type="match status" value="1"/>
</dbReference>
<dbReference type="Pfam" id="PF01966">
    <property type="entry name" value="HD"/>
    <property type="match status" value="1"/>
</dbReference>
<dbReference type="Pfam" id="PF01743">
    <property type="entry name" value="PolyA_pol"/>
    <property type="match status" value="1"/>
</dbReference>
<dbReference type="Pfam" id="PF12627">
    <property type="entry name" value="PolyA_pol_RNAbd"/>
    <property type="match status" value="1"/>
</dbReference>
<dbReference type="PIRSF" id="PIRSF000813">
    <property type="entry name" value="CCA_bact"/>
    <property type="match status" value="1"/>
</dbReference>
<dbReference type="SUPFAM" id="SSF81301">
    <property type="entry name" value="Nucleotidyltransferase"/>
    <property type="match status" value="1"/>
</dbReference>
<dbReference type="SUPFAM" id="SSF81891">
    <property type="entry name" value="Poly A polymerase C-terminal region-like"/>
    <property type="match status" value="1"/>
</dbReference>
<dbReference type="PROSITE" id="PS51831">
    <property type="entry name" value="HD"/>
    <property type="match status" value="1"/>
</dbReference>
<organism>
    <name type="scientific">Pseudomonas aeruginosa (strain ATCC 15692 / DSM 22644 / CIP 104116 / JCM 14847 / LMG 12228 / 1C / PRS 101 / PAO1)</name>
    <dbReference type="NCBI Taxonomy" id="208964"/>
    <lineage>
        <taxon>Bacteria</taxon>
        <taxon>Pseudomonadati</taxon>
        <taxon>Pseudomonadota</taxon>
        <taxon>Gammaproteobacteria</taxon>
        <taxon>Pseudomonadales</taxon>
        <taxon>Pseudomonadaceae</taxon>
        <taxon>Pseudomonas</taxon>
    </lineage>
</organism>
<name>CCA_PSEAE</name>
<reference key="1">
    <citation type="journal article" date="2000" name="Nature">
        <title>Complete genome sequence of Pseudomonas aeruginosa PAO1, an opportunistic pathogen.</title>
        <authorList>
            <person name="Stover C.K."/>
            <person name="Pham X.-Q.T."/>
            <person name="Erwin A.L."/>
            <person name="Mizoguchi S.D."/>
            <person name="Warrener P."/>
            <person name="Hickey M.J."/>
            <person name="Brinkman F.S.L."/>
            <person name="Hufnagle W.O."/>
            <person name="Kowalik D.J."/>
            <person name="Lagrou M."/>
            <person name="Garber R.L."/>
            <person name="Goltry L."/>
            <person name="Tolentino E."/>
            <person name="Westbrock-Wadman S."/>
            <person name="Yuan Y."/>
            <person name="Brody L.L."/>
            <person name="Coulter S.N."/>
            <person name="Folger K.R."/>
            <person name="Kas A."/>
            <person name="Larbig K."/>
            <person name="Lim R.M."/>
            <person name="Smith K.A."/>
            <person name="Spencer D.H."/>
            <person name="Wong G.K.-S."/>
            <person name="Wu Z."/>
            <person name="Paulsen I.T."/>
            <person name="Reizer J."/>
            <person name="Saier M.H. Jr."/>
            <person name="Hancock R.E.W."/>
            <person name="Lory S."/>
            <person name="Olson M.V."/>
        </authorList>
    </citation>
    <scope>NUCLEOTIDE SEQUENCE [LARGE SCALE GENOMIC DNA]</scope>
    <source>
        <strain>ATCC 15692 / DSM 22644 / CIP 104116 / JCM 14847 / LMG 12228 / 1C / PRS 101 / PAO1</strain>
    </source>
</reference>
<protein>
    <recommendedName>
        <fullName evidence="1">Multifunctional CCA protein</fullName>
    </recommendedName>
    <domain>
        <recommendedName>
            <fullName evidence="1">CCA-adding enzyme</fullName>
            <ecNumber evidence="1">2.7.7.72</ecNumber>
        </recommendedName>
        <alternativeName>
            <fullName evidence="1">CCA tRNA nucleotidyltransferase</fullName>
        </alternativeName>
        <alternativeName>
            <fullName evidence="1">tRNA CCA-pyrophosphorylase</fullName>
        </alternativeName>
        <alternativeName>
            <fullName evidence="1">tRNA adenylyl-/cytidylyl-transferase</fullName>
        </alternativeName>
        <alternativeName>
            <fullName evidence="1">tRNA nucleotidyltransferase</fullName>
        </alternativeName>
        <alternativeName>
            <fullName evidence="1">tRNA-NT</fullName>
        </alternativeName>
    </domain>
    <domain>
        <recommendedName>
            <fullName evidence="1">2'-nucleotidase</fullName>
            <ecNumber evidence="1">3.1.3.-</ecNumber>
        </recommendedName>
    </domain>
    <domain>
        <recommendedName>
            <fullName evidence="1">2',3'-cyclic phosphodiesterase</fullName>
            <ecNumber evidence="1">3.1.4.-</ecNumber>
        </recommendedName>
    </domain>
    <domain>
        <recommendedName>
            <fullName evidence="1">Phosphatase</fullName>
            <ecNumber evidence="1">3.1.3.-</ecNumber>
        </recommendedName>
    </domain>
</protein>
<gene>
    <name evidence="1" type="primary">cca</name>
    <name type="ordered locus">PA0584</name>
</gene>
<keyword id="KW-0067">ATP-binding</keyword>
<keyword id="KW-0378">Hydrolase</keyword>
<keyword id="KW-0460">Magnesium</keyword>
<keyword id="KW-0479">Metal-binding</keyword>
<keyword id="KW-0511">Multifunctional enzyme</keyword>
<keyword id="KW-0533">Nickel</keyword>
<keyword id="KW-0547">Nucleotide-binding</keyword>
<keyword id="KW-0548">Nucleotidyltransferase</keyword>
<keyword id="KW-1185">Reference proteome</keyword>
<keyword id="KW-0692">RNA repair</keyword>
<keyword id="KW-0694">RNA-binding</keyword>
<keyword id="KW-0808">Transferase</keyword>
<keyword id="KW-0819">tRNA processing</keyword>
<accession>Q9I5V3</accession>
<comment type="function">
    <text evidence="1">Catalyzes the addition and repair of the essential 3'-terminal CCA sequence in tRNAs without using a nucleic acid template. Adds these three nucleotides in the order of C, C, and A to the tRNA nucleotide-73, using CTP and ATP as substrates and producing inorganic pyrophosphate. tRNA 3'-terminal CCA addition is required both for tRNA processing and repair. Also involved in tRNA surveillance by mediating tandem CCA addition to generate a CCACCA at the 3' terminus of unstable tRNAs. While stable tRNAs receive only 3'-terminal CCA, unstable tRNAs are marked with CCACCA and rapidly degraded.</text>
</comment>
<comment type="catalytic activity">
    <reaction evidence="1">
        <text>a tRNA precursor + 2 CTP + ATP = a tRNA with a 3' CCA end + 3 diphosphate</text>
        <dbReference type="Rhea" id="RHEA:14433"/>
        <dbReference type="Rhea" id="RHEA-COMP:10465"/>
        <dbReference type="Rhea" id="RHEA-COMP:10468"/>
        <dbReference type="ChEBI" id="CHEBI:30616"/>
        <dbReference type="ChEBI" id="CHEBI:33019"/>
        <dbReference type="ChEBI" id="CHEBI:37563"/>
        <dbReference type="ChEBI" id="CHEBI:74896"/>
        <dbReference type="ChEBI" id="CHEBI:83071"/>
        <dbReference type="EC" id="2.7.7.72"/>
    </reaction>
</comment>
<comment type="catalytic activity">
    <reaction evidence="1">
        <text>a tRNA with a 3' CCA end + 2 CTP + ATP = a tRNA with a 3' CCACCA end + 3 diphosphate</text>
        <dbReference type="Rhea" id="RHEA:76235"/>
        <dbReference type="Rhea" id="RHEA-COMP:10468"/>
        <dbReference type="Rhea" id="RHEA-COMP:18655"/>
        <dbReference type="ChEBI" id="CHEBI:30616"/>
        <dbReference type="ChEBI" id="CHEBI:33019"/>
        <dbReference type="ChEBI" id="CHEBI:37563"/>
        <dbReference type="ChEBI" id="CHEBI:83071"/>
        <dbReference type="ChEBI" id="CHEBI:195187"/>
    </reaction>
    <physiologicalReaction direction="left-to-right" evidence="1">
        <dbReference type="Rhea" id="RHEA:76236"/>
    </physiologicalReaction>
</comment>
<comment type="cofactor">
    <cofactor evidence="1">
        <name>Mg(2+)</name>
        <dbReference type="ChEBI" id="CHEBI:18420"/>
    </cofactor>
    <text evidence="1">Magnesium is required for nucleotidyltransferase activity.</text>
</comment>
<comment type="cofactor">
    <cofactor evidence="1">
        <name>Ni(2+)</name>
        <dbReference type="ChEBI" id="CHEBI:49786"/>
    </cofactor>
    <text evidence="1">Nickel for phosphatase activity.</text>
</comment>
<comment type="subunit">
    <text evidence="1">Monomer. Can also form homodimers and oligomers.</text>
</comment>
<comment type="domain">
    <text evidence="1">Comprises two domains: an N-terminal domain containing the nucleotidyltransferase activity and a C-terminal HD domain associated with both phosphodiesterase and phosphatase activities.</text>
</comment>
<comment type="miscellaneous">
    <text evidence="1">A single active site specifically recognizes both ATP and CTP and is responsible for their addition.</text>
</comment>
<comment type="similarity">
    <text evidence="1">Belongs to the tRNA nucleotidyltransferase/poly(A) polymerase family. Bacterial CCA-adding enzyme type 1 subfamily.</text>
</comment>
<feature type="chain" id="PRO_0000138993" description="Multifunctional CCA protein">
    <location>
        <begin position="1"/>
        <end position="410"/>
    </location>
</feature>
<feature type="domain" description="HD" evidence="1">
    <location>
        <begin position="228"/>
        <end position="329"/>
    </location>
</feature>
<feature type="binding site" evidence="1">
    <location>
        <position position="8"/>
    </location>
    <ligand>
        <name>ATP</name>
        <dbReference type="ChEBI" id="CHEBI:30616"/>
    </ligand>
</feature>
<feature type="binding site" evidence="1">
    <location>
        <position position="8"/>
    </location>
    <ligand>
        <name>CTP</name>
        <dbReference type="ChEBI" id="CHEBI:37563"/>
    </ligand>
</feature>
<feature type="binding site" evidence="1">
    <location>
        <position position="11"/>
    </location>
    <ligand>
        <name>ATP</name>
        <dbReference type="ChEBI" id="CHEBI:30616"/>
    </ligand>
</feature>
<feature type="binding site" evidence="1">
    <location>
        <position position="11"/>
    </location>
    <ligand>
        <name>CTP</name>
        <dbReference type="ChEBI" id="CHEBI:37563"/>
    </ligand>
</feature>
<feature type="binding site" evidence="1">
    <location>
        <position position="21"/>
    </location>
    <ligand>
        <name>Mg(2+)</name>
        <dbReference type="ChEBI" id="CHEBI:18420"/>
    </ligand>
</feature>
<feature type="binding site" evidence="1">
    <location>
        <position position="23"/>
    </location>
    <ligand>
        <name>Mg(2+)</name>
        <dbReference type="ChEBI" id="CHEBI:18420"/>
    </ligand>
</feature>
<feature type="binding site" evidence="1">
    <location>
        <position position="91"/>
    </location>
    <ligand>
        <name>ATP</name>
        <dbReference type="ChEBI" id="CHEBI:30616"/>
    </ligand>
</feature>
<feature type="binding site" evidence="1">
    <location>
        <position position="91"/>
    </location>
    <ligand>
        <name>CTP</name>
        <dbReference type="ChEBI" id="CHEBI:37563"/>
    </ligand>
</feature>
<feature type="binding site" evidence="1">
    <location>
        <position position="137"/>
    </location>
    <ligand>
        <name>ATP</name>
        <dbReference type="ChEBI" id="CHEBI:30616"/>
    </ligand>
</feature>
<feature type="binding site" evidence="1">
    <location>
        <position position="137"/>
    </location>
    <ligand>
        <name>CTP</name>
        <dbReference type="ChEBI" id="CHEBI:37563"/>
    </ligand>
</feature>
<feature type="binding site" evidence="1">
    <location>
        <position position="140"/>
    </location>
    <ligand>
        <name>ATP</name>
        <dbReference type="ChEBI" id="CHEBI:30616"/>
    </ligand>
</feature>
<feature type="binding site" evidence="1">
    <location>
        <position position="140"/>
    </location>
    <ligand>
        <name>CTP</name>
        <dbReference type="ChEBI" id="CHEBI:37563"/>
    </ligand>
</feature>
<sequence>MQIYKVGGAVRDRLLGRPVTDIDWVVVGASSDEMLARGYRPVGADFPVFLHPQSGEEYALARTERKSGRGYGGFTFHASPEVTLEEDLTRRDLTINAMAEDEQGRVIDPYGGQADLEARLLRHVSPAFAEDPLRVLRVARFAARYAGLGFRVAAETLALMRQLAESGELQALTPERSWKEISRALMEPNPEVFIQVLHDCGALAELIPEVEALFGVPQPAAHHPEIDTGVHVLSVLQQCARHRQPLSVRWACLLHDLGKGLTSEADWPRHIAHEARGVPLIDAVNQRFRVPRECQELARLVGEYHTHAHRALELRPNTLLELLQSFDVYRRPQRFEEFVAASEMDARGRLGLEQRDYPQAAYLLGAAQAARAVSVKPLVEKGLKGAELGEALKRARLAALKAYKEERGKA</sequence>
<evidence type="ECO:0000255" key="1">
    <source>
        <dbReference type="HAMAP-Rule" id="MF_01261"/>
    </source>
</evidence>
<proteinExistence type="inferred from homology"/>